<dbReference type="EMBL" id="AP009351">
    <property type="protein sequence ID" value="BAF66664.1"/>
    <property type="molecule type" value="Genomic_DNA"/>
</dbReference>
<dbReference type="RefSeq" id="WP_000784244.1">
    <property type="nucleotide sequence ID" value="NZ_JBBIAE010000011.1"/>
</dbReference>
<dbReference type="SMR" id="A0A0H3K6Z6"/>
<dbReference type="KEGG" id="sae:NWMN_0392"/>
<dbReference type="HOGENOM" id="CLU_054950_1_0_9"/>
<dbReference type="Proteomes" id="UP000006386">
    <property type="component" value="Chromosome"/>
</dbReference>
<dbReference type="GO" id="GO:0005576">
    <property type="term" value="C:extracellular region"/>
    <property type="evidence" value="ECO:0007669"/>
    <property type="project" value="InterPro"/>
</dbReference>
<dbReference type="Gene3D" id="2.40.50.110">
    <property type="match status" value="1"/>
</dbReference>
<dbReference type="Gene3D" id="3.10.20.120">
    <property type="match status" value="1"/>
</dbReference>
<dbReference type="InterPro" id="IPR008992">
    <property type="entry name" value="Enterotoxin"/>
</dbReference>
<dbReference type="InterPro" id="IPR015282">
    <property type="entry name" value="SSL_OB"/>
</dbReference>
<dbReference type="InterPro" id="IPR006126">
    <property type="entry name" value="Staph/Strept_toxin_CS"/>
</dbReference>
<dbReference type="InterPro" id="IPR008375">
    <property type="entry name" value="Staph_exotoxin"/>
</dbReference>
<dbReference type="InterPro" id="IPR016091">
    <property type="entry name" value="SuperAg_toxin_C"/>
</dbReference>
<dbReference type="InterPro" id="IPR013307">
    <property type="entry name" value="Superantigen_bac"/>
</dbReference>
<dbReference type="InterPro" id="IPR006123">
    <property type="entry name" value="Toxin_b-grasp_Staph/Strep"/>
</dbReference>
<dbReference type="NCBIfam" id="NF009593">
    <property type="entry name" value="PRK13035.1"/>
    <property type="match status" value="1"/>
</dbReference>
<dbReference type="Pfam" id="PF09199">
    <property type="entry name" value="SSL_OB"/>
    <property type="match status" value="1"/>
</dbReference>
<dbReference type="Pfam" id="PF02876">
    <property type="entry name" value="Stap_Strp_tox_C"/>
    <property type="match status" value="1"/>
</dbReference>
<dbReference type="PRINTS" id="PR01898">
    <property type="entry name" value="SAGSUPRFAMLY"/>
</dbReference>
<dbReference type="PRINTS" id="PR01800">
    <property type="entry name" value="STAPHEXOTOXN"/>
</dbReference>
<dbReference type="PRINTS" id="PR01501">
    <property type="entry name" value="TOXICSSTOXIN"/>
</dbReference>
<dbReference type="SUPFAM" id="SSF50203">
    <property type="entry name" value="Bacterial enterotoxins"/>
    <property type="match status" value="1"/>
</dbReference>
<dbReference type="SUPFAM" id="SSF54334">
    <property type="entry name" value="Superantigen toxins, C-terminal domain"/>
    <property type="match status" value="1"/>
</dbReference>
<dbReference type="PROSITE" id="PS00278">
    <property type="entry name" value="STAPH_STREP_TOXIN_2"/>
    <property type="match status" value="1"/>
</dbReference>
<protein>
    <recommendedName>
        <fullName evidence="1">Staphylococcal superantigen-like 5</fullName>
    </recommendedName>
</protein>
<keyword id="KW-0732">Signal</keyword>
<gene>
    <name evidence="1" type="primary">ssl5</name>
    <name type="ordered locus">NWMN_0392</name>
</gene>
<proteinExistence type="evidence at transcript level"/>
<evidence type="ECO:0000250" key="1">
    <source>
        <dbReference type="UniProtKB" id="Q2G1S6"/>
    </source>
</evidence>
<evidence type="ECO:0000255" key="2"/>
<evidence type="ECO:0000269" key="3">
    <source>
    </source>
</evidence>
<evidence type="ECO:0000305" key="4"/>
<organism>
    <name type="scientific">Staphylococcus aureus (strain Newman)</name>
    <dbReference type="NCBI Taxonomy" id="426430"/>
    <lineage>
        <taxon>Bacteria</taxon>
        <taxon>Bacillati</taxon>
        <taxon>Bacillota</taxon>
        <taxon>Bacilli</taxon>
        <taxon>Bacillales</taxon>
        <taxon>Staphylococcaceae</taxon>
        <taxon>Staphylococcus</taxon>
    </lineage>
</organism>
<name>SSL5_STAAE</name>
<accession>A0A0H3K6Z6</accession>
<feature type="signal peptide" evidence="2">
    <location>
        <begin position="1"/>
        <end position="30"/>
    </location>
</feature>
<feature type="chain" id="PRO_5002613341" description="Staphylococcal superantigen-like 5" evidence="2">
    <location>
        <begin position="31"/>
        <end position="234"/>
    </location>
</feature>
<reference key="1">
    <citation type="journal article" date="2008" name="J. Bacteriol.">
        <title>Genome sequence of Staphylococcus aureus strain Newman and comparative analysis of staphylococcal genomes: polymorphism and evolution of two major pathogenicity islands.</title>
        <authorList>
            <person name="Baba T."/>
            <person name="Bae T."/>
            <person name="Schneewind O."/>
            <person name="Takeuchi F."/>
            <person name="Hiramatsu K."/>
        </authorList>
    </citation>
    <scope>NUCLEOTIDE SEQUENCE [LARGE SCALE GENOMIC DNA]</scope>
    <source>
        <strain>Newman</strain>
    </source>
</reference>
<reference key="2">
    <citation type="journal article" date="2010" name="FEMS Microbiol. Lett.">
        <title>Staphylococcal superantigen-like genes, ssl5 and ssl8, are positively regulated by Sae and negatively by Agr in the Newman strain.</title>
        <authorList>
            <person name="Pantrangi M."/>
            <person name="Singh V.K."/>
            <person name="Wolz C."/>
            <person name="Shukla S.K."/>
        </authorList>
    </citation>
    <scope>INDUCTION BY SAE</scope>
</reference>
<comment type="function">
    <text evidence="1">Secreted protein that plays a role in the inhibition of host innate immune system. Modulates the interaction between host SELPLG and P-selectin thereby preventing initial rolling of neutrophils toward the site of infection. Interferes with leukocyte trafficking by inhibiting host metalloproteinase-9/MMP9 activity. Also associates with two different platelet surface receptors GP1A and GP6 leading to platelet activation and aggregation.</text>
</comment>
<comment type="subunit">
    <text evidence="1">Interacts with host SELPLG; this interaction prevents SELPLG-mediated neutrophil rolling. Interacts with host MMP9 (via sialic acid-containing O-glycans); this interaction inhibits MMP9 activity. Interacts with host GP1BA and GP6; these interactions play an important role in platelet binding and activation.</text>
</comment>
<comment type="induction">
    <text evidence="3">Induced by Sae and repressed by Agr.</text>
</comment>
<comment type="similarity">
    <text evidence="4">Belongs to the staphylococcal/streptococcal toxin family.</text>
</comment>
<sequence length="234" mass="27170">MKMTAIAKASLALGILATGTITSLHQTVNASEHKAKYENVTKDIFDLRDYYSGASKELKNVTGYRYSKGGKHYLIFDKNRKFTRVQIFGKDIERFKARKNPGLDIFVVKEAENRNGTVFSYGGVTKKNQDAYYDYINAPRFQIKRDEGDGIATYGRVHYIYKEEISLKELDFKLRQYLIQNFDLYKKFPKDSKIKVIMKDGGYYTFELNKKLQTNRMSDVIDGRNIEKIEANIR</sequence>